<dbReference type="EC" id="2.7.2.15" evidence="1"/>
<dbReference type="EMBL" id="AM286415">
    <property type="protein sequence ID" value="CAL10468.1"/>
    <property type="status" value="ALT_INIT"/>
    <property type="molecule type" value="Genomic_DNA"/>
</dbReference>
<dbReference type="RefSeq" id="WP_042661584.1">
    <property type="nucleotide sequence ID" value="NC_008800.1"/>
</dbReference>
<dbReference type="RefSeq" id="YP_001004716.1">
    <property type="nucleotide sequence ID" value="NC_008800.1"/>
</dbReference>
<dbReference type="SMR" id="A1JIM9"/>
<dbReference type="KEGG" id="yen:YE0338"/>
<dbReference type="PATRIC" id="fig|393305.7.peg.433"/>
<dbReference type="eggNOG" id="COG0282">
    <property type="taxonomic scope" value="Bacteria"/>
</dbReference>
<dbReference type="HOGENOM" id="CLU_020352_0_1_6"/>
<dbReference type="OrthoDB" id="9802453at2"/>
<dbReference type="UniPathway" id="UPA00052">
    <property type="reaction ID" value="UER00510"/>
</dbReference>
<dbReference type="Proteomes" id="UP000000642">
    <property type="component" value="Chromosome"/>
</dbReference>
<dbReference type="GO" id="GO:0005829">
    <property type="term" value="C:cytosol"/>
    <property type="evidence" value="ECO:0007669"/>
    <property type="project" value="TreeGrafter"/>
</dbReference>
<dbReference type="GO" id="GO:0008776">
    <property type="term" value="F:acetate kinase activity"/>
    <property type="evidence" value="ECO:0007669"/>
    <property type="project" value="TreeGrafter"/>
</dbReference>
<dbReference type="GO" id="GO:0005524">
    <property type="term" value="F:ATP binding"/>
    <property type="evidence" value="ECO:0007669"/>
    <property type="project" value="UniProtKB-KW"/>
</dbReference>
<dbReference type="GO" id="GO:0046872">
    <property type="term" value="F:metal ion binding"/>
    <property type="evidence" value="ECO:0007669"/>
    <property type="project" value="UniProtKB-KW"/>
</dbReference>
<dbReference type="GO" id="GO:0008980">
    <property type="term" value="F:propionate kinase activity"/>
    <property type="evidence" value="ECO:0007669"/>
    <property type="project" value="UniProtKB-UniRule"/>
</dbReference>
<dbReference type="GO" id="GO:0006083">
    <property type="term" value="P:acetate metabolic process"/>
    <property type="evidence" value="ECO:0007669"/>
    <property type="project" value="TreeGrafter"/>
</dbReference>
<dbReference type="GO" id="GO:0070689">
    <property type="term" value="P:L-threonine catabolic process to propionate"/>
    <property type="evidence" value="ECO:0007669"/>
    <property type="project" value="UniProtKB-UniRule"/>
</dbReference>
<dbReference type="CDD" id="cd24010">
    <property type="entry name" value="ASKHA_NBD_AcK_PK"/>
    <property type="match status" value="1"/>
</dbReference>
<dbReference type="Gene3D" id="3.30.420.40">
    <property type="match status" value="2"/>
</dbReference>
<dbReference type="HAMAP" id="MF_00020">
    <property type="entry name" value="Acetate_kinase"/>
    <property type="match status" value="1"/>
</dbReference>
<dbReference type="HAMAP" id="MF_01881">
    <property type="entry name" value="Propion_kin_subfam1"/>
    <property type="match status" value="1"/>
</dbReference>
<dbReference type="InterPro" id="IPR004372">
    <property type="entry name" value="Ac/propionate_kinase"/>
</dbReference>
<dbReference type="InterPro" id="IPR000890">
    <property type="entry name" value="Aliphatic_acid_kin_short-chain"/>
</dbReference>
<dbReference type="InterPro" id="IPR023865">
    <property type="entry name" value="Aliphatic_acid_kinase_CS"/>
</dbReference>
<dbReference type="InterPro" id="IPR043129">
    <property type="entry name" value="ATPase_NBD"/>
</dbReference>
<dbReference type="InterPro" id="IPR024917">
    <property type="entry name" value="Propionate_kinase"/>
</dbReference>
<dbReference type="NCBIfam" id="TIGR00016">
    <property type="entry name" value="ackA"/>
    <property type="match status" value="1"/>
</dbReference>
<dbReference type="NCBIfam" id="NF009045">
    <property type="entry name" value="PRK12379.1"/>
    <property type="match status" value="1"/>
</dbReference>
<dbReference type="PANTHER" id="PTHR21060">
    <property type="entry name" value="ACETATE KINASE"/>
    <property type="match status" value="1"/>
</dbReference>
<dbReference type="PANTHER" id="PTHR21060:SF17">
    <property type="entry name" value="PROPIONATE KINASE"/>
    <property type="match status" value="1"/>
</dbReference>
<dbReference type="Pfam" id="PF00871">
    <property type="entry name" value="Acetate_kinase"/>
    <property type="match status" value="1"/>
</dbReference>
<dbReference type="PIRSF" id="PIRSF000722">
    <property type="entry name" value="Acetate_prop_kin"/>
    <property type="match status" value="1"/>
</dbReference>
<dbReference type="PRINTS" id="PR00471">
    <property type="entry name" value="ACETATEKNASE"/>
</dbReference>
<dbReference type="SUPFAM" id="SSF53067">
    <property type="entry name" value="Actin-like ATPase domain"/>
    <property type="match status" value="2"/>
</dbReference>
<dbReference type="PROSITE" id="PS01075">
    <property type="entry name" value="ACETATE_KINASE_1"/>
    <property type="match status" value="1"/>
</dbReference>
<dbReference type="PROSITE" id="PS01076">
    <property type="entry name" value="ACETATE_KINASE_2"/>
    <property type="match status" value="1"/>
</dbReference>
<evidence type="ECO:0000255" key="1">
    <source>
        <dbReference type="HAMAP-Rule" id="MF_01881"/>
    </source>
</evidence>
<evidence type="ECO:0000305" key="2"/>
<gene>
    <name evidence="1" type="primary">tdcD</name>
    <name type="ordered locus">YE0338</name>
</gene>
<name>TDCD_YERE8</name>
<organism>
    <name type="scientific">Yersinia enterocolitica serotype O:8 / biotype 1B (strain NCTC 13174 / 8081)</name>
    <dbReference type="NCBI Taxonomy" id="393305"/>
    <lineage>
        <taxon>Bacteria</taxon>
        <taxon>Pseudomonadati</taxon>
        <taxon>Pseudomonadota</taxon>
        <taxon>Gammaproteobacteria</taxon>
        <taxon>Enterobacterales</taxon>
        <taxon>Yersiniaceae</taxon>
        <taxon>Yersinia</taxon>
    </lineage>
</organism>
<proteinExistence type="inferred from homology"/>
<comment type="function">
    <text evidence="1">Catalyzes the conversion of propionyl phosphate and ADP to propionate and ATP.</text>
</comment>
<comment type="catalytic activity">
    <reaction evidence="1">
        <text>propanoate + ATP = propanoyl phosphate + ADP</text>
        <dbReference type="Rhea" id="RHEA:23148"/>
        <dbReference type="ChEBI" id="CHEBI:17272"/>
        <dbReference type="ChEBI" id="CHEBI:30616"/>
        <dbReference type="ChEBI" id="CHEBI:58933"/>
        <dbReference type="ChEBI" id="CHEBI:456216"/>
        <dbReference type="EC" id="2.7.2.15"/>
    </reaction>
</comment>
<comment type="cofactor">
    <cofactor evidence="1">
        <name>Mg(2+)</name>
        <dbReference type="ChEBI" id="CHEBI:18420"/>
    </cofactor>
</comment>
<comment type="pathway">
    <text evidence="1">Amino-acid degradation; L-threonine degradation via propanoate pathway; propanoate from L-threonine: step 4/4.</text>
</comment>
<comment type="subunit">
    <text evidence="1">Homodimer.</text>
</comment>
<comment type="similarity">
    <text evidence="1">Belongs to the acetokinase family. TdcD subfamily.</text>
</comment>
<comment type="sequence caution" evidence="2">
    <conflict type="erroneous initiation">
        <sequence resource="EMBL-CDS" id="CAL10468"/>
    </conflict>
    <text>Extended N-terminus.</text>
</comment>
<reference key="1">
    <citation type="journal article" date="2006" name="PLoS Genet.">
        <title>The complete genome sequence and comparative genome analysis of the high pathogenicity Yersinia enterocolitica strain 8081.</title>
        <authorList>
            <person name="Thomson N.R."/>
            <person name="Howard S."/>
            <person name="Wren B.W."/>
            <person name="Holden M.T.G."/>
            <person name="Crossman L."/>
            <person name="Challis G.L."/>
            <person name="Churcher C."/>
            <person name="Mungall K."/>
            <person name="Brooks K."/>
            <person name="Chillingworth T."/>
            <person name="Feltwell T."/>
            <person name="Abdellah Z."/>
            <person name="Hauser H."/>
            <person name="Jagels K."/>
            <person name="Maddison M."/>
            <person name="Moule S."/>
            <person name="Sanders M."/>
            <person name="Whitehead S."/>
            <person name="Quail M.A."/>
            <person name="Dougan G."/>
            <person name="Parkhill J."/>
            <person name="Prentice M.B."/>
        </authorList>
    </citation>
    <scope>NUCLEOTIDE SEQUENCE [LARGE SCALE GENOMIC DNA]</scope>
    <source>
        <strain>NCTC 13174 / 8081</strain>
    </source>
</reference>
<keyword id="KW-0067">ATP-binding</keyword>
<keyword id="KW-0418">Kinase</keyword>
<keyword id="KW-0460">Magnesium</keyword>
<keyword id="KW-0479">Metal-binding</keyword>
<keyword id="KW-0547">Nucleotide-binding</keyword>
<keyword id="KW-0808">Transferase</keyword>
<sequence length="406" mass="43934">MTLNPTVLVINCGSSSIKFSVLTADNCEAVISGIADGIGTEKPFLRIDRVTQFQLAKWNYSDALAAIADELDKRGLSKSISLIGHRIAHGGEIFSESVLIDDRVVEEIKKVSPLAPLHNYANLHGVGAARQLFPGIKQVAVFDTGFHQTLKPEAYLYALPYRYFREQGVRRYGFHGTSYRYVVGEAASFLGFDGSDCGLIIAHLGNGASLCAVQDGKSVDTSMGMTPLEGLIMGTRSGDVDYGALAYLARQTGQSLEDLDHMVNKESGLLGISGLSADMRVLENAYHEGHEGARLAINTFVHRLARHIGGHASSLRRFDALIFTGGIGENSSLIRQLTLEHLAVFGIDIDHAKNKRLQHGTSQIITTARSRVTAAVIPTNEEKMIALDAIRLGYAQQGTVVLEAVI</sequence>
<protein>
    <recommendedName>
        <fullName evidence="1">Propionate kinase</fullName>
        <ecNumber evidence="1">2.7.2.15</ecNumber>
    </recommendedName>
</protein>
<feature type="chain" id="PRO_0000398210" description="Propionate kinase">
    <location>
        <begin position="1"/>
        <end position="406"/>
    </location>
</feature>
<feature type="active site" description="Proton donor/acceptor" evidence="1">
    <location>
        <position position="143"/>
    </location>
</feature>
<feature type="binding site" evidence="1">
    <location>
        <position position="11"/>
    </location>
    <ligand>
        <name>ATP</name>
        <dbReference type="ChEBI" id="CHEBI:30616"/>
    </ligand>
</feature>
<feature type="binding site" evidence="1">
    <location>
        <position position="11"/>
    </location>
    <ligand>
        <name>Mg(2+)</name>
        <dbReference type="ChEBI" id="CHEBI:18420"/>
    </ligand>
</feature>
<feature type="binding site" evidence="1">
    <location>
        <position position="18"/>
    </location>
    <ligand>
        <name>ATP</name>
        <dbReference type="ChEBI" id="CHEBI:30616"/>
    </ligand>
</feature>
<feature type="binding site" evidence="1">
    <location>
        <position position="86"/>
    </location>
    <ligand>
        <name>substrate</name>
    </ligand>
</feature>
<feature type="binding site" evidence="1">
    <location>
        <position position="175"/>
    </location>
    <ligand>
        <name>ATP</name>
        <dbReference type="ChEBI" id="CHEBI:30616"/>
    </ligand>
</feature>
<feature type="binding site" evidence="1">
    <location>
        <begin position="203"/>
        <end position="207"/>
    </location>
    <ligand>
        <name>ATP</name>
        <dbReference type="ChEBI" id="CHEBI:30616"/>
    </ligand>
</feature>
<feature type="binding site" evidence="1">
    <location>
        <begin position="278"/>
        <end position="280"/>
    </location>
    <ligand>
        <name>ATP</name>
        <dbReference type="ChEBI" id="CHEBI:30616"/>
    </ligand>
</feature>
<feature type="binding site" evidence="1">
    <location>
        <begin position="326"/>
        <end position="330"/>
    </location>
    <ligand>
        <name>ATP</name>
        <dbReference type="ChEBI" id="CHEBI:30616"/>
    </ligand>
</feature>
<feature type="site" description="Transition state stabilizer" evidence="1">
    <location>
        <position position="175"/>
    </location>
</feature>
<feature type="site" description="Transition state stabilizer" evidence="1">
    <location>
        <position position="236"/>
    </location>
</feature>
<accession>A1JIM9</accession>